<name>CYSD_RHILO</name>
<proteinExistence type="inferred from homology"/>
<keyword id="KW-0067">ATP-binding</keyword>
<keyword id="KW-0547">Nucleotide-binding</keyword>
<keyword id="KW-0548">Nucleotidyltransferase</keyword>
<keyword id="KW-0808">Transferase</keyword>
<reference key="1">
    <citation type="journal article" date="2000" name="DNA Res.">
        <title>Complete genome structure of the nitrogen-fixing symbiotic bacterium Mesorhizobium loti.</title>
        <authorList>
            <person name="Kaneko T."/>
            <person name="Nakamura Y."/>
            <person name="Sato S."/>
            <person name="Asamizu E."/>
            <person name="Kato T."/>
            <person name="Sasamoto S."/>
            <person name="Watanabe A."/>
            <person name="Idesawa K."/>
            <person name="Ishikawa A."/>
            <person name="Kawashima K."/>
            <person name="Kimura T."/>
            <person name="Kishida Y."/>
            <person name="Kiyokawa C."/>
            <person name="Kohara M."/>
            <person name="Matsumoto M."/>
            <person name="Matsuno A."/>
            <person name="Mochizuki Y."/>
            <person name="Nakayama S."/>
            <person name="Nakazaki N."/>
            <person name="Shimpo S."/>
            <person name="Sugimoto M."/>
            <person name="Takeuchi C."/>
            <person name="Yamada M."/>
            <person name="Tabata S."/>
        </authorList>
    </citation>
    <scope>NUCLEOTIDE SEQUENCE [LARGE SCALE GENOMIC DNA]</scope>
    <source>
        <strain>LMG 29417 / CECT 9101 / MAFF 303099</strain>
    </source>
</reference>
<organism>
    <name type="scientific">Mesorhizobium japonicum (strain LMG 29417 / CECT 9101 / MAFF 303099)</name>
    <name type="common">Mesorhizobium loti (strain MAFF 303099)</name>
    <dbReference type="NCBI Taxonomy" id="266835"/>
    <lineage>
        <taxon>Bacteria</taxon>
        <taxon>Pseudomonadati</taxon>
        <taxon>Pseudomonadota</taxon>
        <taxon>Alphaproteobacteria</taxon>
        <taxon>Hyphomicrobiales</taxon>
        <taxon>Phyllobacteriaceae</taxon>
        <taxon>Mesorhizobium</taxon>
    </lineage>
</organism>
<feature type="chain" id="PRO_1000008978" description="Sulfate adenylyltransferase subunit 2">
    <location>
        <begin position="1"/>
        <end position="301"/>
    </location>
</feature>
<feature type="region of interest" description="Disordered" evidence="2">
    <location>
        <begin position="279"/>
        <end position="301"/>
    </location>
</feature>
<evidence type="ECO:0000255" key="1">
    <source>
        <dbReference type="HAMAP-Rule" id="MF_00064"/>
    </source>
</evidence>
<evidence type="ECO:0000256" key="2">
    <source>
        <dbReference type="SAM" id="MobiDB-lite"/>
    </source>
</evidence>
<dbReference type="EC" id="2.7.7.4" evidence="1"/>
<dbReference type="EMBL" id="BA000012">
    <property type="protein sequence ID" value="BAB54007.1"/>
    <property type="molecule type" value="Genomic_DNA"/>
</dbReference>
<dbReference type="RefSeq" id="WP_010914955.1">
    <property type="nucleotide sequence ID" value="NC_002678.2"/>
</dbReference>
<dbReference type="SMR" id="Q985Q5"/>
<dbReference type="KEGG" id="mlo:mlr7575"/>
<dbReference type="PATRIC" id="fig|266835.9.peg.6057"/>
<dbReference type="eggNOG" id="COG0175">
    <property type="taxonomic scope" value="Bacteria"/>
</dbReference>
<dbReference type="HOGENOM" id="CLU_043026_0_0_5"/>
<dbReference type="UniPathway" id="UPA00140">
    <property type="reaction ID" value="UER00204"/>
</dbReference>
<dbReference type="Proteomes" id="UP000000552">
    <property type="component" value="Chromosome"/>
</dbReference>
<dbReference type="GO" id="GO:0005524">
    <property type="term" value="F:ATP binding"/>
    <property type="evidence" value="ECO:0007669"/>
    <property type="project" value="UniProtKB-KW"/>
</dbReference>
<dbReference type="GO" id="GO:0004781">
    <property type="term" value="F:sulfate adenylyltransferase (ATP) activity"/>
    <property type="evidence" value="ECO:0007669"/>
    <property type="project" value="UniProtKB-UniRule"/>
</dbReference>
<dbReference type="GO" id="GO:0070814">
    <property type="term" value="P:hydrogen sulfide biosynthetic process"/>
    <property type="evidence" value="ECO:0007669"/>
    <property type="project" value="UniProtKB-UniRule"/>
</dbReference>
<dbReference type="GO" id="GO:0000103">
    <property type="term" value="P:sulfate assimilation"/>
    <property type="evidence" value="ECO:0007669"/>
    <property type="project" value="UniProtKB-UniRule"/>
</dbReference>
<dbReference type="CDD" id="cd23946">
    <property type="entry name" value="Sulfate_adenylyltransferase_2"/>
    <property type="match status" value="1"/>
</dbReference>
<dbReference type="FunFam" id="3.40.50.620:FF:000002">
    <property type="entry name" value="Sulfate adenylyltransferase subunit 2"/>
    <property type="match status" value="1"/>
</dbReference>
<dbReference type="Gene3D" id="3.40.50.620">
    <property type="entry name" value="HUPs"/>
    <property type="match status" value="1"/>
</dbReference>
<dbReference type="HAMAP" id="MF_00064">
    <property type="entry name" value="Sulf_adenylyltr_sub2"/>
    <property type="match status" value="1"/>
</dbReference>
<dbReference type="InterPro" id="IPR002500">
    <property type="entry name" value="PAPS_reduct_dom"/>
</dbReference>
<dbReference type="InterPro" id="IPR014729">
    <property type="entry name" value="Rossmann-like_a/b/a_fold"/>
</dbReference>
<dbReference type="InterPro" id="IPR011784">
    <property type="entry name" value="SO4_adenylTrfase_ssu"/>
</dbReference>
<dbReference type="InterPro" id="IPR050128">
    <property type="entry name" value="Sulfate_adenylyltrnsfr_sub2"/>
</dbReference>
<dbReference type="NCBIfam" id="TIGR02039">
    <property type="entry name" value="CysD"/>
    <property type="match status" value="1"/>
</dbReference>
<dbReference type="NCBIfam" id="NF003587">
    <property type="entry name" value="PRK05253.1"/>
    <property type="match status" value="1"/>
</dbReference>
<dbReference type="NCBIfam" id="NF009214">
    <property type="entry name" value="PRK12563.1"/>
    <property type="match status" value="1"/>
</dbReference>
<dbReference type="PANTHER" id="PTHR43196">
    <property type="entry name" value="SULFATE ADENYLYLTRANSFERASE SUBUNIT 2"/>
    <property type="match status" value="1"/>
</dbReference>
<dbReference type="PANTHER" id="PTHR43196:SF1">
    <property type="entry name" value="SULFATE ADENYLYLTRANSFERASE SUBUNIT 2"/>
    <property type="match status" value="1"/>
</dbReference>
<dbReference type="Pfam" id="PF01507">
    <property type="entry name" value="PAPS_reduct"/>
    <property type="match status" value="1"/>
</dbReference>
<dbReference type="PIRSF" id="PIRSF002936">
    <property type="entry name" value="CysDAde_trans"/>
    <property type="match status" value="1"/>
</dbReference>
<dbReference type="SUPFAM" id="SSF52402">
    <property type="entry name" value="Adenine nucleotide alpha hydrolases-like"/>
    <property type="match status" value="1"/>
</dbReference>
<sequence length="301" mass="34821">MTIALTHLQRLEAESIHIFREVAAAFAKPVMLYSVGKDSSVLMHLAMKAFYPAKPPFPFLHVDTTWKFREMIAFRDQMAQKLGFDLLVHVNEDGVRDNINPFDHGSNTHTHVMKTVALRQALDKYGFDAAFGGARRDEEKSRAKERIFSFRNAQHVWDPKNQRPEMWKIFNTRIASGESIRVFPLSNWTELDIWQYILQENIPIVPLYFAKERPVVERDGMLILKDDDRMKLRPGETVENRLVRFRTLGCYPLTGAIESDADTLEAIVGEMLTARTSERQGRLIDRDEAGSMEKKKREGYF</sequence>
<comment type="function">
    <text evidence="1">With CysN forms the ATP sulfurylase (ATPS) that catalyzes the adenylation of sulfate producing adenosine 5'-phosphosulfate (APS) and diphosphate, the first enzymatic step in sulfur assimilation pathway. APS synthesis involves the formation of a high-energy phosphoric-sulfuric acid anhydride bond driven by GTP hydrolysis by CysN coupled to ATP hydrolysis by CysD.</text>
</comment>
<comment type="catalytic activity">
    <reaction evidence="1">
        <text>sulfate + ATP + H(+) = adenosine 5'-phosphosulfate + diphosphate</text>
        <dbReference type="Rhea" id="RHEA:18133"/>
        <dbReference type="ChEBI" id="CHEBI:15378"/>
        <dbReference type="ChEBI" id="CHEBI:16189"/>
        <dbReference type="ChEBI" id="CHEBI:30616"/>
        <dbReference type="ChEBI" id="CHEBI:33019"/>
        <dbReference type="ChEBI" id="CHEBI:58243"/>
        <dbReference type="EC" id="2.7.7.4"/>
    </reaction>
</comment>
<comment type="pathway">
    <text evidence="1">Sulfur metabolism; hydrogen sulfide biosynthesis; sulfite from sulfate: step 1/3.</text>
</comment>
<comment type="subunit">
    <text evidence="1">Heterodimer composed of CysD, the smaller subunit, and CysN.</text>
</comment>
<comment type="similarity">
    <text evidence="1">Belongs to the PAPS reductase family. CysD subfamily.</text>
</comment>
<gene>
    <name evidence="1" type="primary">cysD</name>
    <name type="ordered locus">mlr7575</name>
</gene>
<accession>Q985Q5</accession>
<protein>
    <recommendedName>
        <fullName evidence="1">Sulfate adenylyltransferase subunit 2</fullName>
        <ecNumber evidence="1">2.7.7.4</ecNumber>
    </recommendedName>
    <alternativeName>
        <fullName evidence="1">ATP-sulfurylase small subunit</fullName>
    </alternativeName>
    <alternativeName>
        <fullName evidence="1">Sulfate adenylate transferase</fullName>
        <shortName evidence="1">SAT</shortName>
    </alternativeName>
</protein>